<comment type="function">
    <text evidence="1 7 9 10">Telomerase is a ribonucleoprotein enzyme essential for the replication of chromosome termini in most eukaryotes. Active in progenitor and cancer cells. Inactive, or very low activity, in normal somatic cells. Catalytic component of the teleromerase holoenzyme complex whose main activity is the elongation of telomeres by acting as a reverse transcriptase that adds simple sequence repeats to chromosome ends by copying a template sequence within the RNA component of the enzyme. Catalyzes the RNA-dependent extension of 3'-chromosomal termini with the 6-nucleotide telomeric repeat unit, 5'-TTAGGG-3'. The catalytic cycle involves primer binding, primer extension and release of product once the template boundary has been reached or nascent product translocation followed by further extension. More active on substrates containing 2 or 3 telomeric repeats. Telomerase activity is regulated by a number of factors including telomerase complex-associated proteins, chaperones and polypeptide modifiers. Modulates Wnt signaling. Plays important roles in aging and antiapoptosis (By similarity).</text>
</comment>
<comment type="catalytic activity">
    <reaction evidence="4">
        <text>DNA(n) + a 2'-deoxyribonucleoside 5'-triphosphate = DNA(n+1) + diphosphate</text>
        <dbReference type="Rhea" id="RHEA:22508"/>
        <dbReference type="Rhea" id="RHEA-COMP:17339"/>
        <dbReference type="Rhea" id="RHEA-COMP:17340"/>
        <dbReference type="ChEBI" id="CHEBI:33019"/>
        <dbReference type="ChEBI" id="CHEBI:61560"/>
        <dbReference type="ChEBI" id="CHEBI:173112"/>
        <dbReference type="EC" id="2.7.7.49"/>
    </reaction>
</comment>
<comment type="subunit">
    <text evidence="2 7 8 9">Catalytic component of the telomerase holoenzyme complex composed of one molecule of TERT, one molecule of WRAP53/TCAB1, two molecules of H/ACA ribonucleoprotein complex subunits DKC1, NOP10, NHP2 and GAR1, and a telomerase RNA template component (TERC). The telomerase holoenzyme complex is associated with TEP1, SMG6/EST1A and POT1. The molecular chaperone HSP90/P23 complex is required for correct assembly and stabilization of the active telomerase. Interacts directly with HSP90A and PTGES3. Interacts with HSPA1A; the interaction occurs in the absence of TERC and dissociates once the complex has formed. Interacts with RAN; the interaction promotes nuclear export of TERT. Interacts with XPO1. Interacts with PTPN11; the interaction retains TERT in the nucleus. Interacts with NCL (via RRM1 and C-terminal RRM4/Arg/Gly-rich domains); the interaction is important for nucleolar localization of TERT (By similarity). Interacts with SMARCA4 (via the bromodomain); the interaction regulates Wnt-mediated signaling (PubMed:19571879). Interacts with MCRS1 (isoform MCRS2); the interaction inhibits in vitro telomerase activity (By similarity). Interacts with PIF1; the interaction has no effect on the elongation activity of TERT (PubMed:17130244). Interacts with PML; the interaction recruits TERT to PML bodies and inhibits telomerase activity (By similarity). Interacts with GNL3L (PubMed:19487455). Interacts with isoform 1 and isoform 2 of NVL (By similarity). Interacts with DHX36 (By similarity). Interacts with ATF7 (By similarity).</text>
</comment>
<comment type="interaction">
    <interactant intactId="EBI-9662790">
        <id>O70372</id>
    </interactant>
    <interactant intactId="EBI-1210244">
        <id>Q3TKT4</id>
        <label>Smarca4</label>
    </interactant>
    <organismsDiffer>false</organismsDiffer>
    <experiments>2</experiments>
</comment>
<comment type="subcellular location">
    <subcellularLocation>
        <location evidence="2">Nucleus</location>
        <location evidence="2">Nucleolus</location>
    </subcellularLocation>
    <subcellularLocation>
        <location evidence="1">Nucleus</location>
        <location evidence="1">Nucleoplasm</location>
    </subcellularLocation>
    <subcellularLocation>
        <location>Nucleus</location>
    </subcellularLocation>
    <subcellularLocation>
        <location>Chromosome</location>
        <location>Telomere</location>
    </subcellularLocation>
    <subcellularLocation>
        <location evidence="1">Cytoplasm</location>
    </subcellularLocation>
    <subcellularLocation>
        <location evidence="1">Nucleus</location>
        <location evidence="1">PML body</location>
    </subcellularLocation>
    <text evidence="1">Shuttling between nuclear and cytoplasm depends on cell cycle, phosphorylation states, transformation and DNA damage. Diffuse localization in the nucleoplasm. Enriched in nucleoli of certain cell types. Translocated to the cytoplasm via nuclear pores in a CRM1/RAN-dependent manner involving oxidative stress-mediated phosphorylation at Tyr-697. Dephosphorylation at this site by SHP2 retains TERT in the nucleus. Translocated to the nucleus by phosphorylation by AKT (By similarity).</text>
</comment>
<comment type="tissue specificity">
    <text evidence="6 10 11">High activity in intestine, liver and testis, moderate in lung, very low in muscle, heart and brain.</text>
</comment>
<comment type="developmental stage">
    <text evidence="10">Highest levels in midgestational stages, 9.5 dpc to 15.5 dpc.</text>
</comment>
<comment type="domain">
    <text evidence="1">The primer grip sequence in the RT domain is required for telomerase activity and for stable association with short telomeric primers.</text>
</comment>
<comment type="domain">
    <text evidence="1">The RNA-interacting domain 1 (RD1)/N-terminal extension (NTE) is required for interaction with the pseudoknot-template domain of each of TERC dimers. It contains anchor sites that bind primer nucleotides upstream of the RNA-DNA hybrid and is thus an essential determinant of repeat addition processivity (By similarity).</text>
</comment>
<comment type="domain">
    <text evidence="1">The RNA-interacting domain 2 (RD2) is essential for both interaction with the CR4-CR5 domain of TERC and for DNA synthesis.</text>
</comment>
<comment type="PTM">
    <text evidence="1">Phosphorylation at Tyr-697 under oxidative stress leads to translocation of TERT to the cytoplasm and reduces its antiapoptotic activity. Dephosphorylated by SHP2/PTPN11 leading to nuclear retention. Phosphorylation by the AKT pathway promotes nuclear location. Phosphorylation at the G2/M phase at Ser-447 by DYRK2 promotes ubiquitination by the EDVP complex and degradation (By similarity).</text>
</comment>
<comment type="PTM">
    <text evidence="1">Ubiquitinated by the EDVP complex, a E3 ligase complex following phosphorylation at Ser-447 by DYRK2. Ubiquitinated leads to proteasomal degradation (By similarity).</text>
</comment>
<comment type="similarity">
    <text evidence="12">Belongs to the reverse transcriptase family. Telomerase subfamily.</text>
</comment>
<comment type="caution">
    <text evidence="13">Was originally thought to originate from rat.</text>
</comment>
<dbReference type="EC" id="2.7.7.49"/>
<dbReference type="EMBL" id="AF051911">
    <property type="protein sequence ID" value="AAC09323.1"/>
    <property type="molecule type" value="mRNA"/>
</dbReference>
<dbReference type="EMBL" id="AF073311">
    <property type="protein sequence ID" value="AAC34821.1"/>
    <property type="molecule type" value="mRNA"/>
</dbReference>
<dbReference type="EMBL" id="AF247818">
    <property type="protein sequence ID" value="AAF62177.1"/>
    <property type="molecule type" value="mRNA"/>
</dbReference>
<dbReference type="EMBL" id="AF029235">
    <property type="protein sequence ID" value="AAB84200.1"/>
    <property type="molecule type" value="mRNA"/>
</dbReference>
<dbReference type="CCDS" id="CCDS26633.1"/>
<dbReference type="RefSeq" id="NP_033380.1">
    <property type="nucleotide sequence ID" value="NM_009354.2"/>
</dbReference>
<dbReference type="SMR" id="O70372"/>
<dbReference type="BioGRID" id="204118">
    <property type="interactions" value="2"/>
</dbReference>
<dbReference type="ComplexPortal" id="CPX-1124">
    <property type="entry name" value="Telomerase holoenzyme complex"/>
</dbReference>
<dbReference type="ComplexPortal" id="CPX-19">
    <property type="entry name" value="Telomerase catalytic core complex"/>
</dbReference>
<dbReference type="ComplexPortal" id="CPX-22">
    <property type="entry name" value="TERT-RMRP complex"/>
</dbReference>
<dbReference type="DIP" id="DIP-60451N"/>
<dbReference type="FunCoup" id="O70372">
    <property type="interactions" value="231"/>
</dbReference>
<dbReference type="IntAct" id="O70372">
    <property type="interactions" value="3"/>
</dbReference>
<dbReference type="STRING" id="10090.ENSMUSP00000022104"/>
<dbReference type="GlyGen" id="O70372">
    <property type="glycosylation" value="1 site"/>
</dbReference>
<dbReference type="iPTMnet" id="O70372"/>
<dbReference type="PhosphoSitePlus" id="O70372"/>
<dbReference type="PaxDb" id="10090-ENSMUSP00000022104"/>
<dbReference type="Antibodypedia" id="8998">
    <property type="antibodies" value="984 antibodies from 41 providers"/>
</dbReference>
<dbReference type="DNASU" id="21752"/>
<dbReference type="Ensembl" id="ENSMUST00000022104.9">
    <property type="protein sequence ID" value="ENSMUSP00000022104.8"/>
    <property type="gene ID" value="ENSMUSG00000021611.10"/>
</dbReference>
<dbReference type="GeneID" id="21752"/>
<dbReference type="KEGG" id="mmu:21752"/>
<dbReference type="UCSC" id="uc007rdq.1">
    <property type="organism name" value="mouse"/>
</dbReference>
<dbReference type="AGR" id="MGI:1202709"/>
<dbReference type="CTD" id="7015"/>
<dbReference type="MGI" id="MGI:1202709">
    <property type="gene designation" value="Tert"/>
</dbReference>
<dbReference type="VEuPathDB" id="HostDB:ENSMUSG00000021611"/>
<dbReference type="eggNOG" id="KOG1005">
    <property type="taxonomic scope" value="Eukaryota"/>
</dbReference>
<dbReference type="GeneTree" id="ENSGT00390000018531"/>
<dbReference type="HOGENOM" id="CLU_001996_2_0_1"/>
<dbReference type="InParanoid" id="O70372"/>
<dbReference type="OMA" id="SYKAVQW"/>
<dbReference type="OrthoDB" id="289721at2759"/>
<dbReference type="PhylomeDB" id="O70372"/>
<dbReference type="TreeFam" id="TF329048"/>
<dbReference type="Reactome" id="R-MMU-171319">
    <property type="pathway name" value="Telomere Extension By Telomerase"/>
</dbReference>
<dbReference type="Reactome" id="R-MMU-201722">
    <property type="pathway name" value="Formation of the beta-catenin:TCF transactivating complex"/>
</dbReference>
<dbReference type="BioGRID-ORCS" id="21752">
    <property type="hits" value="6 hits in 82 CRISPR screens"/>
</dbReference>
<dbReference type="ChiTaRS" id="Tert">
    <property type="organism name" value="mouse"/>
</dbReference>
<dbReference type="PRO" id="PR:O70372"/>
<dbReference type="Proteomes" id="UP000000589">
    <property type="component" value="Chromosome 13"/>
</dbReference>
<dbReference type="RNAct" id="O70372">
    <property type="molecule type" value="protein"/>
</dbReference>
<dbReference type="Bgee" id="ENSMUSG00000021611">
    <property type="expression patterns" value="Expressed in paneth cell and 137 other cell types or tissues"/>
</dbReference>
<dbReference type="ExpressionAtlas" id="O70372">
    <property type="expression patterns" value="baseline and differential"/>
</dbReference>
<dbReference type="GO" id="GO:0000781">
    <property type="term" value="C:chromosome, telomeric region"/>
    <property type="evidence" value="ECO:0007669"/>
    <property type="project" value="UniProtKB-SubCell"/>
</dbReference>
<dbReference type="GO" id="GO:0005737">
    <property type="term" value="C:cytoplasm"/>
    <property type="evidence" value="ECO:0000314"/>
    <property type="project" value="MGI"/>
</dbReference>
<dbReference type="GO" id="GO:0005829">
    <property type="term" value="C:cytosol"/>
    <property type="evidence" value="ECO:0007669"/>
    <property type="project" value="Ensembl"/>
</dbReference>
<dbReference type="GO" id="GO:0042645">
    <property type="term" value="C:mitochondrial nucleoid"/>
    <property type="evidence" value="ECO:0007669"/>
    <property type="project" value="Ensembl"/>
</dbReference>
<dbReference type="GO" id="GO:0005739">
    <property type="term" value="C:mitochondrion"/>
    <property type="evidence" value="ECO:0000314"/>
    <property type="project" value="BHF-UCL"/>
</dbReference>
<dbReference type="GO" id="GO:0016607">
    <property type="term" value="C:nuclear speck"/>
    <property type="evidence" value="ECO:0007669"/>
    <property type="project" value="Ensembl"/>
</dbReference>
<dbReference type="GO" id="GO:0005730">
    <property type="term" value="C:nucleolus"/>
    <property type="evidence" value="ECO:0000250"/>
    <property type="project" value="UniProtKB"/>
</dbReference>
<dbReference type="GO" id="GO:0005886">
    <property type="term" value="C:plasma membrane"/>
    <property type="evidence" value="ECO:0000314"/>
    <property type="project" value="MGI"/>
</dbReference>
<dbReference type="GO" id="GO:0016605">
    <property type="term" value="C:PML body"/>
    <property type="evidence" value="ECO:0007669"/>
    <property type="project" value="UniProtKB-SubCell"/>
</dbReference>
<dbReference type="GO" id="GO:0000333">
    <property type="term" value="C:telomerase catalytic core complex"/>
    <property type="evidence" value="ECO:0000315"/>
    <property type="project" value="BHF-UCL"/>
</dbReference>
<dbReference type="GO" id="GO:0005697">
    <property type="term" value="C:telomerase holoenzyme complex"/>
    <property type="evidence" value="ECO:0000250"/>
    <property type="project" value="UniProtKB"/>
</dbReference>
<dbReference type="GO" id="GO:1990572">
    <property type="term" value="C:TERT-RMRP complex"/>
    <property type="evidence" value="ECO:0000250"/>
    <property type="project" value="ComplexPortal"/>
</dbReference>
<dbReference type="GO" id="GO:0003677">
    <property type="term" value="F:DNA binding"/>
    <property type="evidence" value="ECO:0007669"/>
    <property type="project" value="UniProtKB-KW"/>
</dbReference>
<dbReference type="GO" id="GO:0046872">
    <property type="term" value="F:metal ion binding"/>
    <property type="evidence" value="ECO:0007669"/>
    <property type="project" value="UniProtKB-KW"/>
</dbReference>
<dbReference type="GO" id="GO:0042803">
    <property type="term" value="F:protein homodimerization activity"/>
    <property type="evidence" value="ECO:0007669"/>
    <property type="project" value="Ensembl"/>
</dbReference>
<dbReference type="GO" id="GO:0051087">
    <property type="term" value="F:protein-folding chaperone binding"/>
    <property type="evidence" value="ECO:0007669"/>
    <property type="project" value="Ensembl"/>
</dbReference>
<dbReference type="GO" id="GO:0003723">
    <property type="term" value="F:RNA binding"/>
    <property type="evidence" value="ECO:0000353"/>
    <property type="project" value="BHF-UCL"/>
</dbReference>
<dbReference type="GO" id="GO:0003968">
    <property type="term" value="F:RNA-directed RNA polymerase activity"/>
    <property type="evidence" value="ECO:0007669"/>
    <property type="project" value="Ensembl"/>
</dbReference>
<dbReference type="GO" id="GO:0003720">
    <property type="term" value="F:telomerase activity"/>
    <property type="evidence" value="ECO:0000314"/>
    <property type="project" value="MGI"/>
</dbReference>
<dbReference type="GO" id="GO:0070034">
    <property type="term" value="F:telomerase RNA binding"/>
    <property type="evidence" value="ECO:0000353"/>
    <property type="project" value="BHF-UCL"/>
</dbReference>
<dbReference type="GO" id="GO:0098680">
    <property type="term" value="F:template-free RNA nucleotidyltransferase"/>
    <property type="evidence" value="ECO:0007669"/>
    <property type="project" value="Ensembl"/>
</dbReference>
<dbReference type="GO" id="GO:0001223">
    <property type="term" value="F:transcription coactivator binding"/>
    <property type="evidence" value="ECO:0000353"/>
    <property type="project" value="BHF-UCL"/>
</dbReference>
<dbReference type="GO" id="GO:0000049">
    <property type="term" value="F:tRNA binding"/>
    <property type="evidence" value="ECO:0007669"/>
    <property type="project" value="Ensembl"/>
</dbReference>
<dbReference type="GO" id="GO:0071456">
    <property type="term" value="P:cellular response to hypoxia"/>
    <property type="evidence" value="ECO:0007669"/>
    <property type="project" value="Ensembl"/>
</dbReference>
<dbReference type="GO" id="GO:0022616">
    <property type="term" value="P:DNA strand elongation"/>
    <property type="evidence" value="ECO:0007669"/>
    <property type="project" value="Ensembl"/>
</dbReference>
<dbReference type="GO" id="GO:0070200">
    <property type="term" value="P:establishment of protein localization to telomere"/>
    <property type="evidence" value="ECO:0007669"/>
    <property type="project" value="Ensembl"/>
</dbReference>
<dbReference type="GO" id="GO:0007507">
    <property type="term" value="P:heart development"/>
    <property type="evidence" value="ECO:0007669"/>
    <property type="project" value="Ensembl"/>
</dbReference>
<dbReference type="GO" id="GO:0007005">
    <property type="term" value="P:mitochondrion organization"/>
    <property type="evidence" value="ECO:0007669"/>
    <property type="project" value="Ensembl"/>
</dbReference>
<dbReference type="GO" id="GO:2000773">
    <property type="term" value="P:negative regulation of cellular senescence"/>
    <property type="evidence" value="ECO:0007669"/>
    <property type="project" value="Ensembl"/>
</dbReference>
<dbReference type="GO" id="GO:2000352">
    <property type="term" value="P:negative regulation of endothelial cell apoptotic process"/>
    <property type="evidence" value="ECO:0007669"/>
    <property type="project" value="Ensembl"/>
</dbReference>
<dbReference type="GO" id="GO:2001240">
    <property type="term" value="P:negative regulation of extrinsic apoptotic signaling pathway in absence of ligand"/>
    <property type="evidence" value="ECO:0007669"/>
    <property type="project" value="Ensembl"/>
</dbReference>
<dbReference type="GO" id="GO:0043524">
    <property type="term" value="P:negative regulation of neuron apoptotic process"/>
    <property type="evidence" value="ECO:0007669"/>
    <property type="project" value="Ensembl"/>
</dbReference>
<dbReference type="GO" id="GO:0045766">
    <property type="term" value="P:positive regulation of angiogenesis"/>
    <property type="evidence" value="ECO:0007669"/>
    <property type="project" value="Ensembl"/>
</dbReference>
<dbReference type="GO" id="GO:0046326">
    <property type="term" value="P:positive regulation of D-glucose import"/>
    <property type="evidence" value="ECO:0000315"/>
    <property type="project" value="MGI"/>
</dbReference>
<dbReference type="GO" id="GO:1900087">
    <property type="term" value="P:positive regulation of G1/S transition of mitotic cell cycle"/>
    <property type="evidence" value="ECO:0007669"/>
    <property type="project" value="Ensembl"/>
</dbReference>
<dbReference type="GO" id="GO:0042635">
    <property type="term" value="P:positive regulation of hair cycle"/>
    <property type="evidence" value="ECO:0000315"/>
    <property type="project" value="BHF-UCL"/>
</dbReference>
<dbReference type="GO" id="GO:1902895">
    <property type="term" value="P:positive regulation of miRNA transcription"/>
    <property type="evidence" value="ECO:0007669"/>
    <property type="project" value="Ensembl"/>
</dbReference>
<dbReference type="GO" id="GO:1904751">
    <property type="term" value="P:positive regulation of protein localization to nucleolus"/>
    <property type="evidence" value="ECO:0007669"/>
    <property type="project" value="Ensembl"/>
</dbReference>
<dbReference type="GO" id="GO:2000648">
    <property type="term" value="P:positive regulation of stem cell proliferation"/>
    <property type="evidence" value="ECO:0000315"/>
    <property type="project" value="BHF-UCL"/>
</dbReference>
<dbReference type="GO" id="GO:1903620">
    <property type="term" value="P:positive regulation of transdifferentiation"/>
    <property type="evidence" value="ECO:0007669"/>
    <property type="project" value="Ensembl"/>
</dbReference>
<dbReference type="GO" id="GO:1904754">
    <property type="term" value="P:positive regulation of vascular associated smooth muscle cell migration"/>
    <property type="evidence" value="ECO:0007669"/>
    <property type="project" value="Ensembl"/>
</dbReference>
<dbReference type="GO" id="GO:1904707">
    <property type="term" value="P:positive regulation of vascular associated smooth muscle cell proliferation"/>
    <property type="evidence" value="ECO:0007669"/>
    <property type="project" value="Ensembl"/>
</dbReference>
<dbReference type="GO" id="GO:0030177">
    <property type="term" value="P:positive regulation of Wnt signaling pathway"/>
    <property type="evidence" value="ECO:0000316"/>
    <property type="project" value="BHF-UCL"/>
</dbReference>
<dbReference type="GO" id="GO:0006606">
    <property type="term" value="P:protein import into nucleus"/>
    <property type="evidence" value="ECO:0007669"/>
    <property type="project" value="Ensembl"/>
</dbReference>
<dbReference type="GO" id="GO:0031647">
    <property type="term" value="P:regulation of protein stability"/>
    <property type="evidence" value="ECO:0007669"/>
    <property type="project" value="Ensembl"/>
</dbReference>
<dbReference type="GO" id="GO:0090399">
    <property type="term" value="P:replicative senescence"/>
    <property type="evidence" value="ECO:0007669"/>
    <property type="project" value="Ensembl"/>
</dbReference>
<dbReference type="GO" id="GO:0046686">
    <property type="term" value="P:response to cadmium ion"/>
    <property type="evidence" value="ECO:0007669"/>
    <property type="project" value="Ensembl"/>
</dbReference>
<dbReference type="GO" id="GO:0030422">
    <property type="term" value="P:siRNA processing"/>
    <property type="evidence" value="ECO:0000250"/>
    <property type="project" value="ComplexPortal"/>
</dbReference>
<dbReference type="GO" id="GO:0140745">
    <property type="term" value="P:siRNA transcription"/>
    <property type="evidence" value="ECO:0007669"/>
    <property type="project" value="Ensembl"/>
</dbReference>
<dbReference type="GO" id="GO:0000722">
    <property type="term" value="P:telomere maintenance via recombination"/>
    <property type="evidence" value="ECO:0000303"/>
    <property type="project" value="ComplexPortal"/>
</dbReference>
<dbReference type="GO" id="GO:0007004">
    <property type="term" value="P:telomere maintenance via telomerase"/>
    <property type="evidence" value="ECO:0000250"/>
    <property type="project" value="UniProtKB"/>
</dbReference>
<dbReference type="CDD" id="cd01648">
    <property type="entry name" value="TERT"/>
    <property type="match status" value="1"/>
</dbReference>
<dbReference type="FunFam" id="1.10.132.70:FF:000001">
    <property type="entry name" value="Telomerase reverse transcriptase"/>
    <property type="match status" value="1"/>
</dbReference>
<dbReference type="FunFam" id="1.10.357.90:FF:000001">
    <property type="entry name" value="Telomerase reverse transcriptase"/>
    <property type="match status" value="1"/>
</dbReference>
<dbReference type="FunFam" id="3.30.70.2630:FF:000001">
    <property type="entry name" value="Telomerase reverse transcriptase"/>
    <property type="match status" value="1"/>
</dbReference>
<dbReference type="Gene3D" id="1.10.132.70">
    <property type="match status" value="1"/>
</dbReference>
<dbReference type="Gene3D" id="1.10.357.90">
    <property type="match status" value="1"/>
</dbReference>
<dbReference type="Gene3D" id="3.30.70.2630">
    <property type="match status" value="1"/>
</dbReference>
<dbReference type="InterPro" id="IPR043502">
    <property type="entry name" value="DNA/RNA_pol_sf"/>
</dbReference>
<dbReference type="InterPro" id="IPR000477">
    <property type="entry name" value="RT_dom"/>
</dbReference>
<dbReference type="InterPro" id="IPR021891">
    <property type="entry name" value="Telomerase_RBD"/>
</dbReference>
<dbReference type="InterPro" id="IPR003545">
    <property type="entry name" value="Telomerase_RT"/>
</dbReference>
<dbReference type="InterPro" id="IPR049139">
    <property type="entry name" value="TERT_C"/>
</dbReference>
<dbReference type="PANTHER" id="PTHR12066">
    <property type="entry name" value="TELOMERASE REVERSE TRANSCRIPTASE"/>
    <property type="match status" value="1"/>
</dbReference>
<dbReference type="PANTHER" id="PTHR12066:SF0">
    <property type="entry name" value="TELOMERASE REVERSE TRANSCRIPTASE"/>
    <property type="match status" value="1"/>
</dbReference>
<dbReference type="Pfam" id="PF00078">
    <property type="entry name" value="RVT_1"/>
    <property type="match status" value="1"/>
</dbReference>
<dbReference type="Pfam" id="PF12009">
    <property type="entry name" value="Telomerase_RBD"/>
    <property type="match status" value="1"/>
</dbReference>
<dbReference type="Pfam" id="PF21399">
    <property type="entry name" value="TERT_C"/>
    <property type="match status" value="1"/>
</dbReference>
<dbReference type="PRINTS" id="PR01365">
    <property type="entry name" value="TELOMERASERT"/>
</dbReference>
<dbReference type="SMART" id="SM00975">
    <property type="entry name" value="Telomerase_RBD"/>
    <property type="match status" value="1"/>
</dbReference>
<dbReference type="SUPFAM" id="SSF56672">
    <property type="entry name" value="DNA/RNA polymerases"/>
    <property type="match status" value="1"/>
</dbReference>
<dbReference type="PROSITE" id="PS50878">
    <property type="entry name" value="RT_POL"/>
    <property type="match status" value="1"/>
</dbReference>
<reference key="1">
    <citation type="journal article" date="1998" name="Oncogene">
        <title>Expression of mouse telomerase reverse transcriptase during development, differentiation and proliferation.</title>
        <authorList>
            <person name="Greenberg R.A."/>
            <person name="Allsopp R.C."/>
            <person name="Chin L."/>
            <person name="Morin G.B."/>
            <person name="DePinho R.A."/>
        </authorList>
    </citation>
    <scope>NUCLEOTIDE SEQUENCE [MRNA]</scope>
    <scope>FUNCTION</scope>
    <scope>DEVELOPMENTAL STAGE</scope>
    <scope>INDUCTION</scope>
    <scope>TISSUE SPECIFICITY</scope>
</reference>
<reference key="2">
    <citation type="journal article" date="1998" name="Proc. Natl. Acad. Sci. U.S.A.">
        <title>Expression of mouse telomerase catalytic subunit in embryos and adult tissues.</title>
        <authorList>
            <person name="Martin-Rivera L."/>
            <person name="Herrera E."/>
            <person name="Albar J.P."/>
            <person name="Blasco M.A."/>
        </authorList>
    </citation>
    <scope>NUCLEOTIDE SEQUENCE [MRNA]</scope>
    <scope>TISSUE SPECIFICITY</scope>
</reference>
<reference key="3">
    <citation type="journal article" date="2003" name="Life Sci.">
        <title>Cloning of rat telomerase catalytic subunit functional domains, reconstitution of telomerase activity and enzymatic profile of pig and chicken tissues.</title>
        <authorList>
            <person name="Wong S.C."/>
            <person name="Ong L.L."/>
            <person name="Er C.P."/>
            <person name="Gao S."/>
            <person name="Yu H."/>
            <person name="So J.B."/>
        </authorList>
    </citation>
    <scope>NUCLEOTIDE SEQUENCE [MRNA] OF 548-1122</scope>
    <scope>TISSUE SPECIFICITY</scope>
</reference>
<reference key="4">
    <citation type="submission" date="1997-10" db="EMBL/GenBank/DDBJ databases">
        <title>Partial sequence of Mus musculus telomerase catalytic subunit homolog.</title>
        <authorList>
            <person name="Drissi R."/>
            <person name="Cleveland J.L."/>
        </authorList>
    </citation>
    <scope>NUCLEOTIDE SEQUENCE [MRNA] OF 550-616</scope>
</reference>
<reference key="5">
    <citation type="journal article" date="2007" name="Mol. Cell. Biol.">
        <title>Murine Pif1 interacts with telomerase and is dispensable for telomere function in vivo.</title>
        <authorList>
            <person name="Snow B.E."/>
            <person name="Mateyak M."/>
            <person name="Paderova J."/>
            <person name="Wakeham A."/>
            <person name="Iorio C."/>
            <person name="Zakian V."/>
            <person name="Squire J."/>
            <person name="Harrington L."/>
        </authorList>
    </citation>
    <scope>INTERACTION WITH PIF1</scope>
    <scope>FUNCTION</scope>
</reference>
<reference key="6">
    <citation type="journal article" date="2009" name="J. Cell Biol.">
        <title>GNL3L stabilizes the TRF1 complex and promotes mitotic transition.</title>
        <authorList>
            <person name="Zhu Q."/>
            <person name="Meng L."/>
            <person name="Hsu J.K."/>
            <person name="Lin T."/>
            <person name="Teishima J."/>
            <person name="Tsai R.Y."/>
        </authorList>
    </citation>
    <scope>INTERACTION WITH GNL3L</scope>
</reference>
<reference key="7">
    <citation type="journal article" date="2009" name="Nature">
        <title>Telomerase modulates Wnt signalling by association with target gene chromatin.</title>
        <authorList>
            <person name="Park J.I."/>
            <person name="Venteicher A.S."/>
            <person name="Hong J.Y."/>
            <person name="Choi J."/>
            <person name="Jun S."/>
            <person name="Shkreli M."/>
            <person name="Chang W."/>
            <person name="Meng Z."/>
            <person name="Cheung P."/>
            <person name="Ji H."/>
            <person name="McLaughlin M."/>
            <person name="Veenstra T.D."/>
            <person name="Nusse R."/>
            <person name="McCrea P.D."/>
            <person name="Artandi S.E."/>
        </authorList>
    </citation>
    <scope>INTERACTION WITH SMARCA4</scope>
    <scope>FUNCTION</scope>
</reference>
<name>TERT_MOUSE</name>
<gene>
    <name type="primary">Tert</name>
</gene>
<evidence type="ECO:0000250" key="1"/>
<evidence type="ECO:0000250" key="2">
    <source>
        <dbReference type="UniProtKB" id="O14746"/>
    </source>
</evidence>
<evidence type="ECO:0000250" key="3">
    <source>
        <dbReference type="UniProtKB" id="Q4KTA7"/>
    </source>
</evidence>
<evidence type="ECO:0000255" key="4">
    <source>
        <dbReference type="PROSITE-ProRule" id="PRU00405"/>
    </source>
</evidence>
<evidence type="ECO:0000256" key="5">
    <source>
        <dbReference type="SAM" id="MobiDB-lite"/>
    </source>
</evidence>
<evidence type="ECO:0000269" key="6">
    <source>
    </source>
</evidence>
<evidence type="ECO:0000269" key="7">
    <source>
    </source>
</evidence>
<evidence type="ECO:0000269" key="8">
    <source>
    </source>
</evidence>
<evidence type="ECO:0000269" key="9">
    <source>
    </source>
</evidence>
<evidence type="ECO:0000269" key="10">
    <source>
    </source>
</evidence>
<evidence type="ECO:0000269" key="11">
    <source>
    </source>
</evidence>
<evidence type="ECO:0000305" key="12"/>
<evidence type="ECO:0000305" key="13">
    <source>
    </source>
</evidence>
<feature type="chain" id="PRO_0000054926" description="Telomerase reverse transcriptase">
    <location>
        <begin position="1"/>
        <end position="1122"/>
    </location>
</feature>
<feature type="domain" description="Reverse transcriptase" evidence="4">
    <location>
        <begin position="595"/>
        <end position="928"/>
    </location>
</feature>
<feature type="region of interest" description="RNA-interacting domain 1" evidence="1">
    <location>
        <begin position="1"/>
        <end position="239"/>
    </location>
</feature>
<feature type="region of interest" description="GQ motif" evidence="1">
    <location>
        <begin position="58"/>
        <end position="205"/>
    </location>
</feature>
<feature type="region of interest" description="Required for regulating specificity for telomeric DNA and for processivity for primer elongation" evidence="1">
    <location>
        <begin position="137"/>
        <end position="141"/>
    </location>
</feature>
<feature type="region of interest" description="Disordered" evidence="5">
    <location>
        <begin position="213"/>
        <end position="296"/>
    </location>
</feature>
<feature type="region of interest" description="Linker" evidence="1">
    <location>
        <begin position="240"/>
        <end position="328"/>
    </location>
</feature>
<feature type="region of interest" description="Required for oligomerization" evidence="1">
    <location>
        <begin position="306"/>
        <end position="528"/>
    </location>
</feature>
<feature type="region of interest" description="RNA-interacting domain 2" evidence="1">
    <location>
        <begin position="329"/>
        <end position="540"/>
    </location>
</feature>
<feature type="region of interest" description="QFP motif" evidence="1">
    <location>
        <begin position="381"/>
        <end position="511"/>
    </location>
</feature>
<feature type="region of interest" description="CP motif" evidence="1">
    <location>
        <begin position="402"/>
        <end position="422"/>
    </location>
</feature>
<feature type="region of interest" description="Required for oligomerization" evidence="1">
    <location>
        <begin position="907"/>
        <end position="921"/>
    </location>
</feature>
<feature type="region of interest" description="Primer grip sequence" evidence="1">
    <location>
        <begin position="923"/>
        <end position="927"/>
    </location>
</feature>
<feature type="region of interest" description="CTE" evidence="1">
    <location>
        <begin position="929"/>
        <end position="1122"/>
    </location>
</feature>
<feature type="short sequence motif" description="TFLY; involved in RNA binding" evidence="3">
    <location>
        <begin position="332"/>
        <end position="337"/>
    </location>
</feature>
<feature type="compositionally biased region" description="Basic and acidic residues" evidence="5">
    <location>
        <begin position="284"/>
        <end position="295"/>
    </location>
</feature>
<feature type="binding site" evidence="4">
    <location>
        <position position="702"/>
    </location>
    <ligand>
        <name>Mg(2+)</name>
        <dbReference type="ChEBI" id="CHEBI:18420"/>
        <note>catalytic</note>
    </ligand>
</feature>
<feature type="binding site" evidence="4">
    <location>
        <position position="861"/>
    </location>
    <ligand>
        <name>Mg(2+)</name>
        <dbReference type="ChEBI" id="CHEBI:18420"/>
        <note>catalytic</note>
    </ligand>
</feature>
<feature type="binding site" evidence="4">
    <location>
        <position position="862"/>
    </location>
    <ligand>
        <name>Mg(2+)</name>
        <dbReference type="ChEBI" id="CHEBI:18420"/>
        <note>catalytic</note>
    </ligand>
</feature>
<feature type="site" description="Required for optimal binding of telomeric ssDNA and incorporation of nucleotides at the second position of the template" evidence="1">
    <location>
        <position position="169"/>
    </location>
</feature>
<feature type="site" description="Required for nucleotide incorporation and primer extension rate" evidence="1">
    <location>
        <position position="860"/>
    </location>
</feature>
<feature type="modified residue" description="Phosphoserine; by DYRK2" evidence="2">
    <location>
        <position position="447"/>
    </location>
</feature>
<feature type="modified residue" description="Phosphotyrosine; by SRC-type Tyr-kinases" evidence="2">
    <location>
        <position position="697"/>
    </location>
</feature>
<feature type="sequence conflict" description="In Ref. 4; AAB84200." evidence="12" ref="4">
    <original>I</original>
    <variation>V</variation>
    <location>
        <position position="553"/>
    </location>
</feature>
<protein>
    <recommendedName>
        <fullName>Telomerase reverse transcriptase</fullName>
        <ecNumber>2.7.7.49</ecNumber>
    </recommendedName>
    <alternativeName>
        <fullName>Telomerase catalytic subunit</fullName>
    </alternativeName>
</protein>
<accession>O70372</accession>
<accession>O35432</accession>
<accession>Q9JK99</accession>
<organism>
    <name type="scientific">Mus musculus</name>
    <name type="common">Mouse</name>
    <dbReference type="NCBI Taxonomy" id="10090"/>
    <lineage>
        <taxon>Eukaryota</taxon>
        <taxon>Metazoa</taxon>
        <taxon>Chordata</taxon>
        <taxon>Craniata</taxon>
        <taxon>Vertebrata</taxon>
        <taxon>Euteleostomi</taxon>
        <taxon>Mammalia</taxon>
        <taxon>Eutheria</taxon>
        <taxon>Euarchontoglires</taxon>
        <taxon>Glires</taxon>
        <taxon>Rodentia</taxon>
        <taxon>Myomorpha</taxon>
        <taxon>Muroidea</taxon>
        <taxon>Muridae</taxon>
        <taxon>Murinae</taxon>
        <taxon>Mus</taxon>
        <taxon>Mus</taxon>
    </lineage>
</organism>
<proteinExistence type="evidence at protein level"/>
<sequence>MTRAPRCPAVRSLLRSRYREVWPLATFVRRLGPEGRRLVQPGDPKIYRTLVAQCLVCMHWGSQPPPADLSFHQVSSLKELVARVVQRLCERNERNVLAFGFELLNEARGGPPMAFTSSVRSYLPNTVIETLRVSGAWMLLLSRVGDDLLVYLLAHCALYLLVPPSCAYQVCGSPLYQICATTDIWPSVSASYRPTRPVGRNFTNLRFLQQIKSSSRQEAPKPLALPSRGTKRHLSLTSTSVPSAKKARCYPVPRVEEGPHRQVLPTPSGKSWVPSPARSPEVPTAEKDLSSKGKVSDLSLSGSVCCKHKPSSTSLLSPPRQNAFQLRPFIETRHFLYSRGDGQERLNPSFLLSNLQPNLTGARRLVEIIFLGSRPRTSGPLCRTHRLSRRYWQMRPLFQQLLVNHAECQYVRLLRSHCRFRTANQQVTDALNTSPPHLMDLLRLHSSPWQVYGFLRACLCKVVSASLWGTRHNERRFFKNLKKFISLGKYGKLSLQELMWKMKVEDCHWLRSSPGKDRVPAAEHRLRERILATFLFWLMDTYVVQLLRSFFYITESTFQKNRLFFYRKSVWSKLQSIGVRQHLERVRLRELSQEEVRHHQDTWLAMPICRLRFIPKPNGLRPIVNMSYSMGTRALGRRKQAQHFTQRLKTLFSMLNYERTKHPHLMGSSVLGMNDIYRTWRAFVLRVRALDQTPRMYFVKADVTGAYDAIPQGKLVEVVANMIRHSESTYCIRQYAVVRRDSQGQVHKSFRRQVTTLSDLQPYMGQFLKHLQDSDASALRNSVVIEQSISMNESSSSLFDFFLHFLRHSVVKIGDRCYTQCQGIPQGSSLSTLLCSLCFGDMENKLFAEVQRDGLLLRFVDDFLLVTPHLDQAKTFLSTLVHGVPEYGCMINLQKTVVNFPVEPGTLGGAAPYQLPAHCLFPWCGLLLDTQTLEVFCDYSGYAQTSIKTSLTFQSVFKAGKTMRNKLLSVLRLKCHGLFLDLQVNSLQTVCINIYKIFLLQAYRFHACVIQLPFDQRVRKNLTFFLGIISSQASCCYAILKVKNPGMTLKASGSFPPEAAHWLCYQAFLLKLAAHSVIYKCLLGPLRTAQKLLCRKLPEATMTILKAAADPALSTDFQTILD</sequence>
<keyword id="KW-0158">Chromosome</keyword>
<keyword id="KW-0963">Cytoplasm</keyword>
<keyword id="KW-0238">DNA-binding</keyword>
<keyword id="KW-0460">Magnesium</keyword>
<keyword id="KW-0479">Metal-binding</keyword>
<keyword id="KW-0548">Nucleotidyltransferase</keyword>
<keyword id="KW-0539">Nucleus</keyword>
<keyword id="KW-0597">Phosphoprotein</keyword>
<keyword id="KW-1185">Reference proteome</keyword>
<keyword id="KW-0687">Ribonucleoprotein</keyword>
<keyword id="KW-0695">RNA-directed DNA polymerase</keyword>
<keyword id="KW-0779">Telomere</keyword>
<keyword id="KW-0808">Transferase</keyword>
<keyword id="KW-0832">Ubl conjugation</keyword>